<organism>
    <name type="scientific">Brucella melitensis biotype 2 (strain ATCC 23457)</name>
    <dbReference type="NCBI Taxonomy" id="546272"/>
    <lineage>
        <taxon>Bacteria</taxon>
        <taxon>Pseudomonadati</taxon>
        <taxon>Pseudomonadota</taxon>
        <taxon>Alphaproteobacteria</taxon>
        <taxon>Hyphomicrobiales</taxon>
        <taxon>Brucellaceae</taxon>
        <taxon>Brucella/Ochrobactrum group</taxon>
        <taxon>Brucella</taxon>
    </lineage>
</organism>
<keyword id="KW-0997">Cell inner membrane</keyword>
<keyword id="KW-1003">Cell membrane</keyword>
<keyword id="KW-0472">Membrane</keyword>
<keyword id="KW-0520">NAD</keyword>
<keyword id="KW-0874">Quinone</keyword>
<keyword id="KW-1278">Translocase</keyword>
<keyword id="KW-0812">Transmembrane</keyword>
<keyword id="KW-1133">Transmembrane helix</keyword>
<keyword id="KW-0813">Transport</keyword>
<keyword id="KW-0830">Ubiquinone</keyword>
<sequence>MEIGIAHYLTVSAILFTLGVFGIFLNRKNVIVILMSIELILLSVNLNFVAFSSQLGDLVGQVFALFVLTVAAAEAAIGLAILVVFFRNRGSIAVEDVNVMKG</sequence>
<name>NUOK_BRUMB</name>
<dbReference type="EC" id="7.1.1.-" evidence="1"/>
<dbReference type="EMBL" id="CP001488">
    <property type="protein sequence ID" value="ACO00607.1"/>
    <property type="molecule type" value="Genomic_DNA"/>
</dbReference>
<dbReference type="RefSeq" id="WP_002963947.1">
    <property type="nucleotide sequence ID" value="NC_012441.1"/>
</dbReference>
<dbReference type="SMR" id="C0RIE9"/>
<dbReference type="GeneID" id="97533881"/>
<dbReference type="KEGG" id="bmi:BMEA_A0854"/>
<dbReference type="HOGENOM" id="CLU_144724_2_0_5"/>
<dbReference type="Proteomes" id="UP000001748">
    <property type="component" value="Chromosome I"/>
</dbReference>
<dbReference type="GO" id="GO:0030964">
    <property type="term" value="C:NADH dehydrogenase complex"/>
    <property type="evidence" value="ECO:0007669"/>
    <property type="project" value="TreeGrafter"/>
</dbReference>
<dbReference type="GO" id="GO:0005886">
    <property type="term" value="C:plasma membrane"/>
    <property type="evidence" value="ECO:0007669"/>
    <property type="project" value="UniProtKB-SubCell"/>
</dbReference>
<dbReference type="GO" id="GO:0050136">
    <property type="term" value="F:NADH:ubiquinone reductase (non-electrogenic) activity"/>
    <property type="evidence" value="ECO:0007669"/>
    <property type="project" value="UniProtKB-UniRule"/>
</dbReference>
<dbReference type="GO" id="GO:0048038">
    <property type="term" value="F:quinone binding"/>
    <property type="evidence" value="ECO:0007669"/>
    <property type="project" value="UniProtKB-KW"/>
</dbReference>
<dbReference type="GO" id="GO:0042773">
    <property type="term" value="P:ATP synthesis coupled electron transport"/>
    <property type="evidence" value="ECO:0007669"/>
    <property type="project" value="InterPro"/>
</dbReference>
<dbReference type="FunFam" id="1.10.287.3510:FF:000001">
    <property type="entry name" value="NADH-quinone oxidoreductase subunit K"/>
    <property type="match status" value="1"/>
</dbReference>
<dbReference type="Gene3D" id="1.10.287.3510">
    <property type="match status" value="1"/>
</dbReference>
<dbReference type="HAMAP" id="MF_01456">
    <property type="entry name" value="NDH1_NuoK"/>
    <property type="match status" value="1"/>
</dbReference>
<dbReference type="InterPro" id="IPR001133">
    <property type="entry name" value="NADH_UbQ_OxRdtase_chain4L/K"/>
</dbReference>
<dbReference type="InterPro" id="IPR039428">
    <property type="entry name" value="NUOK/Mnh_C1-like"/>
</dbReference>
<dbReference type="NCBIfam" id="NF004320">
    <property type="entry name" value="PRK05715.1-2"/>
    <property type="match status" value="1"/>
</dbReference>
<dbReference type="NCBIfam" id="NF004321">
    <property type="entry name" value="PRK05715.1-3"/>
    <property type="match status" value="1"/>
</dbReference>
<dbReference type="NCBIfam" id="NF004323">
    <property type="entry name" value="PRK05715.1-5"/>
    <property type="match status" value="1"/>
</dbReference>
<dbReference type="PANTHER" id="PTHR11434:SF21">
    <property type="entry name" value="NADH DEHYDROGENASE SUBUNIT 4L-RELATED"/>
    <property type="match status" value="1"/>
</dbReference>
<dbReference type="PANTHER" id="PTHR11434">
    <property type="entry name" value="NADH-UBIQUINONE OXIDOREDUCTASE SUBUNIT ND4L"/>
    <property type="match status" value="1"/>
</dbReference>
<dbReference type="Pfam" id="PF00420">
    <property type="entry name" value="Oxidored_q2"/>
    <property type="match status" value="1"/>
</dbReference>
<protein>
    <recommendedName>
        <fullName evidence="1">NADH-quinone oxidoreductase subunit K</fullName>
        <ecNumber evidence="1">7.1.1.-</ecNumber>
    </recommendedName>
    <alternativeName>
        <fullName evidence="1">NADH dehydrogenase I subunit K</fullName>
    </alternativeName>
    <alternativeName>
        <fullName evidence="1">NDH-1 subunit K</fullName>
    </alternativeName>
</protein>
<accession>C0RIE9</accession>
<proteinExistence type="inferred from homology"/>
<gene>
    <name evidence="1" type="primary">nuoK</name>
    <name type="ordered locus">BMEA_A0854</name>
</gene>
<feature type="chain" id="PRO_0000389975" description="NADH-quinone oxidoreductase subunit K">
    <location>
        <begin position="1"/>
        <end position="102"/>
    </location>
</feature>
<feature type="transmembrane region" description="Helical" evidence="1">
    <location>
        <begin position="5"/>
        <end position="25"/>
    </location>
</feature>
<feature type="transmembrane region" description="Helical" evidence="1">
    <location>
        <begin position="31"/>
        <end position="51"/>
    </location>
</feature>
<feature type="transmembrane region" description="Helical" evidence="1">
    <location>
        <begin position="66"/>
        <end position="86"/>
    </location>
</feature>
<reference key="1">
    <citation type="submission" date="2009-03" db="EMBL/GenBank/DDBJ databases">
        <title>Brucella melitensis ATCC 23457 whole genome shotgun sequencing project.</title>
        <authorList>
            <person name="Setubal J.C."/>
            <person name="Boyle S."/>
            <person name="Crasta O.R."/>
            <person name="Gillespie J.J."/>
            <person name="Kenyon R.W."/>
            <person name="Lu J."/>
            <person name="Mane S."/>
            <person name="Nagrani S."/>
            <person name="Shallom J.M."/>
            <person name="Shallom S."/>
            <person name="Shukla M."/>
            <person name="Snyder E.E."/>
            <person name="Sobral B.W."/>
            <person name="Wattam A.R."/>
            <person name="Will R."/>
            <person name="Williams K."/>
            <person name="Yoo H."/>
            <person name="Munk C."/>
            <person name="Tapia R."/>
            <person name="Han C."/>
            <person name="Detter J.C."/>
            <person name="Bruce D."/>
            <person name="Brettin T.S."/>
        </authorList>
    </citation>
    <scope>NUCLEOTIDE SEQUENCE [LARGE SCALE GENOMIC DNA]</scope>
    <source>
        <strain>ATCC 23457</strain>
    </source>
</reference>
<comment type="function">
    <text evidence="1">NDH-1 shuttles electrons from NADH, via FMN and iron-sulfur (Fe-S) centers, to quinones in the respiratory chain. The immediate electron acceptor for the enzyme in this species is believed to be ubiquinone. Couples the redox reaction to proton translocation (for every two electrons transferred, four hydrogen ions are translocated across the cytoplasmic membrane), and thus conserves the redox energy in a proton gradient.</text>
</comment>
<comment type="catalytic activity">
    <reaction evidence="1">
        <text>a quinone + NADH + 5 H(+)(in) = a quinol + NAD(+) + 4 H(+)(out)</text>
        <dbReference type="Rhea" id="RHEA:57888"/>
        <dbReference type="ChEBI" id="CHEBI:15378"/>
        <dbReference type="ChEBI" id="CHEBI:24646"/>
        <dbReference type="ChEBI" id="CHEBI:57540"/>
        <dbReference type="ChEBI" id="CHEBI:57945"/>
        <dbReference type="ChEBI" id="CHEBI:132124"/>
    </reaction>
</comment>
<comment type="subunit">
    <text evidence="1">NDH-1 is composed of 14 different subunits. Subunits NuoA, H, J, K, L, M, N constitute the membrane sector of the complex.</text>
</comment>
<comment type="subcellular location">
    <subcellularLocation>
        <location evidence="1">Cell inner membrane</location>
        <topology evidence="1">Multi-pass membrane protein</topology>
    </subcellularLocation>
</comment>
<comment type="similarity">
    <text evidence="1">Belongs to the complex I subunit 4L family.</text>
</comment>
<evidence type="ECO:0000255" key="1">
    <source>
        <dbReference type="HAMAP-Rule" id="MF_01456"/>
    </source>
</evidence>